<sequence>MTVLNRMDTLAEDMVADITDSPTGYTGVDGDAQWAAEVRRLAKLRGATILAHNYQLPEIQDVADHVGDSLALSRIAAEAPEDTIVFCGVHFMAETAKILSPDKTVLIPDQRAGCSLADSITPEDLRAWKDEHPGAVVVSYFNTTAAVKALTDICCTSSNAVDVVASIDPDREVLFCPDQFLGAHVRRMTGRENLHVWAGECHVHAGINGDELGERARANPDAELFVHPECGCATSALYLAGEGAFPAERVKILSTGGMLDAANTTSARKVLVATEVGMLYQLRRAAPQVDFQAVNDRASCRYMKMITPAALLRCLVEGADEVHVDPGIAAAGRRSVQRMIEIGQPGGGE</sequence>
<feature type="chain" id="PRO_1000061160" description="Quinolinate synthase">
    <location>
        <begin position="1"/>
        <end position="349"/>
    </location>
</feature>
<feature type="binding site" evidence="1">
    <location>
        <position position="52"/>
    </location>
    <ligand>
        <name>iminosuccinate</name>
        <dbReference type="ChEBI" id="CHEBI:77875"/>
    </ligand>
</feature>
<feature type="binding site" evidence="1">
    <location>
        <position position="69"/>
    </location>
    <ligand>
        <name>iminosuccinate</name>
        <dbReference type="ChEBI" id="CHEBI:77875"/>
    </ligand>
</feature>
<feature type="binding site" evidence="1">
    <location>
        <position position="114"/>
    </location>
    <ligand>
        <name>[4Fe-4S] cluster</name>
        <dbReference type="ChEBI" id="CHEBI:49883"/>
    </ligand>
</feature>
<feature type="binding site" evidence="1">
    <location>
        <begin position="140"/>
        <end position="142"/>
    </location>
    <ligand>
        <name>iminosuccinate</name>
        <dbReference type="ChEBI" id="CHEBI:77875"/>
    </ligand>
</feature>
<feature type="binding site" evidence="1">
    <location>
        <position position="157"/>
    </location>
    <ligand>
        <name>iminosuccinate</name>
        <dbReference type="ChEBI" id="CHEBI:77875"/>
    </ligand>
</feature>
<feature type="binding site" evidence="1">
    <location>
        <position position="201"/>
    </location>
    <ligand>
        <name>[4Fe-4S] cluster</name>
        <dbReference type="ChEBI" id="CHEBI:49883"/>
    </ligand>
</feature>
<feature type="binding site" evidence="1">
    <location>
        <begin position="227"/>
        <end position="229"/>
    </location>
    <ligand>
        <name>iminosuccinate</name>
        <dbReference type="ChEBI" id="CHEBI:77875"/>
    </ligand>
</feature>
<feature type="binding site" evidence="1">
    <location>
        <position position="255"/>
    </location>
    <ligand>
        <name>iminosuccinate</name>
        <dbReference type="ChEBI" id="CHEBI:77875"/>
    </ligand>
</feature>
<feature type="binding site" evidence="1">
    <location>
        <position position="300"/>
    </location>
    <ligand>
        <name>[4Fe-4S] cluster</name>
        <dbReference type="ChEBI" id="CHEBI:49883"/>
    </ligand>
</feature>
<keyword id="KW-0004">4Fe-4S</keyword>
<keyword id="KW-0963">Cytoplasm</keyword>
<keyword id="KW-0408">Iron</keyword>
<keyword id="KW-0411">Iron-sulfur</keyword>
<keyword id="KW-0479">Metal-binding</keyword>
<keyword id="KW-0662">Pyridine nucleotide biosynthesis</keyword>
<keyword id="KW-1185">Reference proteome</keyword>
<keyword id="KW-0808">Transferase</keyword>
<protein>
    <recommendedName>
        <fullName evidence="1">Quinolinate synthase</fullName>
        <ecNumber evidence="1">2.5.1.72</ecNumber>
    </recommendedName>
</protein>
<dbReference type="EC" id="2.5.1.72" evidence="1"/>
<dbReference type="EMBL" id="AE016958">
    <property type="protein sequence ID" value="AAS03606.1"/>
    <property type="molecule type" value="Genomic_DNA"/>
</dbReference>
<dbReference type="RefSeq" id="WP_003877726.1">
    <property type="nucleotide sequence ID" value="NZ_CP106873.1"/>
</dbReference>
<dbReference type="SMR" id="Q740Q3"/>
<dbReference type="STRING" id="262316.MAP_1289"/>
<dbReference type="KEGG" id="mpa:MAP_1289"/>
<dbReference type="PATRIC" id="fig|262316.17.peg.1358"/>
<dbReference type="eggNOG" id="COG0379">
    <property type="taxonomic scope" value="Bacteria"/>
</dbReference>
<dbReference type="HOGENOM" id="CLU_047382_0_0_11"/>
<dbReference type="UniPathway" id="UPA00253">
    <property type="reaction ID" value="UER00327"/>
</dbReference>
<dbReference type="Proteomes" id="UP000000580">
    <property type="component" value="Chromosome"/>
</dbReference>
<dbReference type="GO" id="GO:0005829">
    <property type="term" value="C:cytosol"/>
    <property type="evidence" value="ECO:0007669"/>
    <property type="project" value="TreeGrafter"/>
</dbReference>
<dbReference type="GO" id="GO:0051539">
    <property type="term" value="F:4 iron, 4 sulfur cluster binding"/>
    <property type="evidence" value="ECO:0007669"/>
    <property type="project" value="UniProtKB-KW"/>
</dbReference>
<dbReference type="GO" id="GO:0046872">
    <property type="term" value="F:metal ion binding"/>
    <property type="evidence" value="ECO:0007669"/>
    <property type="project" value="UniProtKB-KW"/>
</dbReference>
<dbReference type="GO" id="GO:0008987">
    <property type="term" value="F:quinolinate synthetase A activity"/>
    <property type="evidence" value="ECO:0007669"/>
    <property type="project" value="UniProtKB-UniRule"/>
</dbReference>
<dbReference type="GO" id="GO:0034628">
    <property type="term" value="P:'de novo' NAD biosynthetic process from L-aspartate"/>
    <property type="evidence" value="ECO:0007669"/>
    <property type="project" value="TreeGrafter"/>
</dbReference>
<dbReference type="FunFam" id="3.40.50.10800:FF:000007">
    <property type="entry name" value="Quinolinate synthase A"/>
    <property type="match status" value="1"/>
</dbReference>
<dbReference type="Gene3D" id="3.40.50.10800">
    <property type="entry name" value="NadA-like"/>
    <property type="match status" value="3"/>
</dbReference>
<dbReference type="HAMAP" id="MF_00568">
    <property type="entry name" value="NadA_type2"/>
    <property type="match status" value="1"/>
</dbReference>
<dbReference type="InterPro" id="IPR003473">
    <property type="entry name" value="NadA"/>
</dbReference>
<dbReference type="InterPro" id="IPR036094">
    <property type="entry name" value="NadA_sf"/>
</dbReference>
<dbReference type="InterPro" id="IPR023066">
    <property type="entry name" value="Quinolinate_synth_type2"/>
</dbReference>
<dbReference type="NCBIfam" id="TIGR00550">
    <property type="entry name" value="nadA"/>
    <property type="match status" value="1"/>
</dbReference>
<dbReference type="NCBIfam" id="NF006878">
    <property type="entry name" value="PRK09375.1-2"/>
    <property type="match status" value="1"/>
</dbReference>
<dbReference type="NCBIfam" id="NF006879">
    <property type="entry name" value="PRK09375.1-4"/>
    <property type="match status" value="1"/>
</dbReference>
<dbReference type="PANTHER" id="PTHR30573:SF0">
    <property type="entry name" value="QUINOLINATE SYNTHASE, CHLOROPLASTIC"/>
    <property type="match status" value="1"/>
</dbReference>
<dbReference type="PANTHER" id="PTHR30573">
    <property type="entry name" value="QUINOLINATE SYNTHETASE A"/>
    <property type="match status" value="1"/>
</dbReference>
<dbReference type="Pfam" id="PF02445">
    <property type="entry name" value="NadA"/>
    <property type="match status" value="1"/>
</dbReference>
<dbReference type="SUPFAM" id="SSF142754">
    <property type="entry name" value="NadA-like"/>
    <property type="match status" value="1"/>
</dbReference>
<reference key="1">
    <citation type="journal article" date="2005" name="Proc. Natl. Acad. Sci. U.S.A.">
        <title>The complete genome sequence of Mycobacterium avium subspecies paratuberculosis.</title>
        <authorList>
            <person name="Li L."/>
            <person name="Bannantine J.P."/>
            <person name="Zhang Q."/>
            <person name="Amonsin A."/>
            <person name="May B.J."/>
            <person name="Alt D."/>
            <person name="Banerji N."/>
            <person name="Kanjilal S."/>
            <person name="Kapur V."/>
        </authorList>
    </citation>
    <scope>NUCLEOTIDE SEQUENCE [LARGE SCALE GENOMIC DNA]</scope>
    <source>
        <strain>ATCC BAA-968 / K-10</strain>
    </source>
</reference>
<accession>Q740Q3</accession>
<evidence type="ECO:0000255" key="1">
    <source>
        <dbReference type="HAMAP-Rule" id="MF_00568"/>
    </source>
</evidence>
<proteinExistence type="inferred from homology"/>
<name>NADA_MYCPA</name>
<comment type="function">
    <text evidence="1">Catalyzes the condensation of iminoaspartate with dihydroxyacetone phosphate to form quinolinate.</text>
</comment>
<comment type="catalytic activity">
    <reaction evidence="1">
        <text>iminosuccinate + dihydroxyacetone phosphate = quinolinate + phosphate + 2 H2O + H(+)</text>
        <dbReference type="Rhea" id="RHEA:25888"/>
        <dbReference type="ChEBI" id="CHEBI:15377"/>
        <dbReference type="ChEBI" id="CHEBI:15378"/>
        <dbReference type="ChEBI" id="CHEBI:29959"/>
        <dbReference type="ChEBI" id="CHEBI:43474"/>
        <dbReference type="ChEBI" id="CHEBI:57642"/>
        <dbReference type="ChEBI" id="CHEBI:77875"/>
        <dbReference type="EC" id="2.5.1.72"/>
    </reaction>
    <physiologicalReaction direction="left-to-right" evidence="1">
        <dbReference type="Rhea" id="RHEA:25889"/>
    </physiologicalReaction>
</comment>
<comment type="cofactor">
    <cofactor evidence="1">
        <name>[4Fe-4S] cluster</name>
        <dbReference type="ChEBI" id="CHEBI:49883"/>
    </cofactor>
    <text evidence="1">Binds 1 [4Fe-4S] cluster per subunit.</text>
</comment>
<comment type="pathway">
    <text evidence="1">Cofactor biosynthesis; NAD(+) biosynthesis; quinolinate from iminoaspartate: step 1/1.</text>
</comment>
<comment type="subcellular location">
    <subcellularLocation>
        <location evidence="1">Cytoplasm</location>
    </subcellularLocation>
</comment>
<comment type="similarity">
    <text evidence="1">Belongs to the quinolinate synthase family. Type 2 subfamily.</text>
</comment>
<organism>
    <name type="scientific">Mycolicibacterium paratuberculosis (strain ATCC BAA-968 / K-10)</name>
    <name type="common">Mycobacterium paratuberculosis</name>
    <dbReference type="NCBI Taxonomy" id="262316"/>
    <lineage>
        <taxon>Bacteria</taxon>
        <taxon>Bacillati</taxon>
        <taxon>Actinomycetota</taxon>
        <taxon>Actinomycetes</taxon>
        <taxon>Mycobacteriales</taxon>
        <taxon>Mycobacteriaceae</taxon>
        <taxon>Mycobacterium</taxon>
        <taxon>Mycobacterium avium complex (MAC)</taxon>
    </lineage>
</organism>
<gene>
    <name evidence="1" type="primary">nadA</name>
    <name type="ordered locus">MAP_1289</name>
</gene>